<reference key="1">
    <citation type="journal article" date="1995" name="Yeast">
        <title>Sequence analysis of a 30 kb DNA segment from yeast chromosome XIV carrying a ribosomal protein gene cluster, the genes encoding a plasma membrane protein and a subunit of replication factor C, and a novel putative serine/threonine protein kinase gene.</title>
        <authorList>
            <person name="Maurer K.C.T."/>
            <person name="Urbanus J.H.M."/>
            <person name="Planta R.J."/>
        </authorList>
    </citation>
    <scope>NUCLEOTIDE SEQUENCE [GENOMIC DNA]</scope>
    <source>
        <strain>ATCC 96604 / S288c / FY1679</strain>
    </source>
</reference>
<reference key="2">
    <citation type="journal article" date="1997" name="Nature">
        <title>The nucleotide sequence of Saccharomyces cerevisiae chromosome XIV and its evolutionary implications.</title>
        <authorList>
            <person name="Philippsen P."/>
            <person name="Kleine K."/>
            <person name="Poehlmann R."/>
            <person name="Duesterhoeft A."/>
            <person name="Hamberg K."/>
            <person name="Hegemann J.H."/>
            <person name="Obermaier B."/>
            <person name="Urrestarazu L.A."/>
            <person name="Aert R."/>
            <person name="Albermann K."/>
            <person name="Altmann R."/>
            <person name="Andre B."/>
            <person name="Baladron V."/>
            <person name="Ballesta J.P.G."/>
            <person name="Becam A.-M."/>
            <person name="Beinhauer J.D."/>
            <person name="Boskovic J."/>
            <person name="Buitrago M.J."/>
            <person name="Bussereau F."/>
            <person name="Coster F."/>
            <person name="Crouzet M."/>
            <person name="D'Angelo M."/>
            <person name="Dal Pero F."/>
            <person name="De Antoni A."/>
            <person name="del Rey F."/>
            <person name="Doignon F."/>
            <person name="Domdey H."/>
            <person name="Dubois E."/>
            <person name="Fiedler T.A."/>
            <person name="Fleig U."/>
            <person name="Floeth M."/>
            <person name="Fritz C."/>
            <person name="Gaillardin C."/>
            <person name="Garcia-Cantalejo J.M."/>
            <person name="Glansdorff N."/>
            <person name="Goffeau A."/>
            <person name="Gueldener U."/>
            <person name="Herbert C.J."/>
            <person name="Heumann K."/>
            <person name="Heuss-Neitzel D."/>
            <person name="Hilbert H."/>
            <person name="Hinni K."/>
            <person name="Iraqui Houssaini I."/>
            <person name="Jacquet M."/>
            <person name="Jimenez A."/>
            <person name="Jonniaux J.-L."/>
            <person name="Karpfinger-Hartl L."/>
            <person name="Lanfranchi G."/>
            <person name="Lepingle A."/>
            <person name="Levesque H."/>
            <person name="Lyck R."/>
            <person name="Maftahi M."/>
            <person name="Mallet L."/>
            <person name="Maurer C.T.C."/>
            <person name="Messenguy F."/>
            <person name="Mewes H.-W."/>
            <person name="Moestl D."/>
            <person name="Nasr F."/>
            <person name="Nicaud J.-M."/>
            <person name="Niedenthal R.K."/>
            <person name="Pandolfo D."/>
            <person name="Pierard A."/>
            <person name="Piravandi E."/>
            <person name="Planta R.J."/>
            <person name="Pohl T.M."/>
            <person name="Purnelle B."/>
            <person name="Rebischung C."/>
            <person name="Remacha M.A."/>
            <person name="Revuelta J.L."/>
            <person name="Rinke M."/>
            <person name="Saiz J.E."/>
            <person name="Sartorello F."/>
            <person name="Scherens B."/>
            <person name="Sen-Gupta M."/>
            <person name="Soler-Mira A."/>
            <person name="Urbanus J.H.M."/>
            <person name="Valle G."/>
            <person name="Van Dyck L."/>
            <person name="Verhasselt P."/>
            <person name="Vierendeels F."/>
            <person name="Vissers S."/>
            <person name="Voet M."/>
            <person name="Volckaert G."/>
            <person name="Wach A."/>
            <person name="Wambutt R."/>
            <person name="Wedler H."/>
            <person name="Zollner A."/>
            <person name="Hani J."/>
        </authorList>
    </citation>
    <scope>NUCLEOTIDE SEQUENCE [LARGE SCALE GENOMIC DNA]</scope>
    <source>
        <strain>ATCC 204508 / S288c</strain>
    </source>
</reference>
<reference key="3">
    <citation type="journal article" date="2014" name="G3 (Bethesda)">
        <title>The reference genome sequence of Saccharomyces cerevisiae: Then and now.</title>
        <authorList>
            <person name="Engel S.R."/>
            <person name="Dietrich F.S."/>
            <person name="Fisk D.G."/>
            <person name="Binkley G."/>
            <person name="Balakrishnan R."/>
            <person name="Costanzo M.C."/>
            <person name="Dwight S.S."/>
            <person name="Hitz B.C."/>
            <person name="Karra K."/>
            <person name="Nash R.S."/>
            <person name="Weng S."/>
            <person name="Wong E.D."/>
            <person name="Lloyd P."/>
            <person name="Skrzypek M.S."/>
            <person name="Miyasato S.R."/>
            <person name="Simison M."/>
            <person name="Cherry J.M."/>
        </authorList>
    </citation>
    <scope>GENOME REANNOTATION</scope>
    <source>
        <strain>ATCC 204508 / S288c</strain>
    </source>
</reference>
<reference key="4">
    <citation type="journal article" date="2002" name="Mol. Cell. Biol.">
        <title>Yeast Ysl2p, homologous to Sec7 domain guanine nucleotide exchange factors, functions in endocytosis and maintenance of vacuole integrity and interacts with the Arf-Like small GTPase Arl1p.</title>
        <authorList>
            <person name="Jochum A."/>
            <person name="Jackson D."/>
            <person name="Schwarz H."/>
            <person name="Pipkorn R."/>
            <person name="Singer-Krueger B."/>
        </authorList>
    </citation>
    <scope>FUNCTION</scope>
    <scope>SUBCELLULAR LOCATION</scope>
    <scope>INTERACTION WITH ARL1</scope>
</reference>
<reference key="5">
    <citation type="journal article" date="2003" name="Nature">
        <title>Global analysis of protein expression in yeast.</title>
        <authorList>
            <person name="Ghaemmaghami S."/>
            <person name="Huh W.-K."/>
            <person name="Bower K."/>
            <person name="Howson R.W."/>
            <person name="Belle A."/>
            <person name="Dephoure N."/>
            <person name="O'Shea E.K."/>
            <person name="Weissman J.S."/>
        </authorList>
    </citation>
    <scope>LEVEL OF PROTEIN EXPRESSION [LARGE SCALE ANALYSIS]</scope>
</reference>
<reference key="6">
    <citation type="journal article" date="2002" name="Mol. Biol. Cell">
        <title>Genomic screen for vacuolar protein sorting genes in Saccharomyces cerevisiae.</title>
        <authorList>
            <person name="Bonangelino C.J."/>
            <person name="Chavez E.M."/>
            <person name="Bonifacino J.S."/>
        </authorList>
    </citation>
    <scope>FUNCTION</scope>
</reference>
<reference key="7">
    <citation type="journal article" date="2004" name="Mol. Cell. Biol.">
        <title>Molecular interactions of yeast Neo1p, an essential member of the Drs2 family of aminophospholipid translocases, and its role in membrane trafficking within the endomembrane system.</title>
        <authorList>
            <person name="Wicky S."/>
            <person name="Schwarz H."/>
            <person name="Singer-Krueger B."/>
        </authorList>
    </citation>
    <scope>INTERACTION WITH NEO1</scope>
</reference>
<reference key="8">
    <citation type="journal article" date="2005" name="J. Cell Sci.">
        <title>Yeast Mon2p is a highly conserved protein that functions in the cytoplasm-to-vacuole transport pathway and is required for Golgi homeostasis.</title>
        <authorList>
            <person name="Efe J.A."/>
            <person name="Plattner F."/>
            <person name="Hulo N."/>
            <person name="Kressler D."/>
            <person name="Emr S.D."/>
            <person name="Deloche O."/>
        </authorList>
    </citation>
    <scope>FUNCTION</scope>
    <scope>SUBUNIT</scope>
    <scope>INTERACTION WITH DOP1</scope>
    <scope>SUBCELLULAR LOCATION</scope>
</reference>
<reference key="9">
    <citation type="journal article" date="2005" name="Mol. Cell. Proteomics">
        <title>Quantitative phosphoproteomics applied to the yeast pheromone signaling pathway.</title>
        <authorList>
            <person name="Gruhler A."/>
            <person name="Olsen J.V."/>
            <person name="Mohammed S."/>
            <person name="Mortensen P."/>
            <person name="Faergeman N.J."/>
            <person name="Mann M."/>
            <person name="Jensen O.N."/>
        </authorList>
    </citation>
    <scope>IDENTIFICATION BY MASS SPECTROMETRY [LARGE SCALE ANALYSIS]</scope>
    <source>
        <strain>YAL6B</strain>
    </source>
</reference>
<reference key="10">
    <citation type="journal article" date="2006" name="J. Biol. Chem.">
        <title>Mon2, a relative of large Arf exchange factors, recruits Dop1 to the Golgi apparatus.</title>
        <authorList>
            <person name="Gillingham A.K."/>
            <person name="Whyte J.R.C."/>
            <person name="Panic B."/>
            <person name="Munro S."/>
        </authorList>
    </citation>
    <scope>FUNCTION</scope>
    <scope>INTERACTION WITH DOP1</scope>
    <scope>SUBCELLULAR LOCATION</scope>
</reference>
<reference key="11">
    <citation type="journal article" date="2008" name="Mol. Cell. Proteomics">
        <title>A multidimensional chromatography technology for in-depth phosphoproteome analysis.</title>
        <authorList>
            <person name="Albuquerque C.P."/>
            <person name="Smolka M.B."/>
            <person name="Payne S.H."/>
            <person name="Bafna V."/>
            <person name="Eng J."/>
            <person name="Zhou H."/>
        </authorList>
    </citation>
    <scope>IDENTIFICATION BY MASS SPECTROMETRY [LARGE SCALE ANALYSIS]</scope>
</reference>
<reference key="12">
    <citation type="journal article" date="2009" name="Science">
        <title>Global analysis of Cdk1 substrate phosphorylation sites provides insights into evolution.</title>
        <authorList>
            <person name="Holt L.J."/>
            <person name="Tuch B.B."/>
            <person name="Villen J."/>
            <person name="Johnson A.D."/>
            <person name="Gygi S.P."/>
            <person name="Morgan D.O."/>
        </authorList>
    </citation>
    <scope>PHOSPHORYLATION [LARGE SCALE ANALYSIS] AT SER-564; SER-567 AND SER-571</scope>
    <scope>IDENTIFICATION BY MASS SPECTROMETRY [LARGE SCALE ANALYSIS]</scope>
</reference>
<reference key="13">
    <citation type="journal article" date="2012" name="Proc. Natl. Acad. Sci. U.S.A.">
        <title>N-terminal acetylome analyses and functional insights of the N-terminal acetyltransferase NatB.</title>
        <authorList>
            <person name="Van Damme P."/>
            <person name="Lasa M."/>
            <person name="Polevoda B."/>
            <person name="Gazquez C."/>
            <person name="Elosegui-Artola A."/>
            <person name="Kim D.S."/>
            <person name="De Juan-Pardo E."/>
            <person name="Demeyer K."/>
            <person name="Hole K."/>
            <person name="Larrea E."/>
            <person name="Timmerman E."/>
            <person name="Prieto J."/>
            <person name="Arnesen T."/>
            <person name="Sherman F."/>
            <person name="Gevaert K."/>
            <person name="Aldabe R."/>
        </authorList>
    </citation>
    <scope>ACETYLATION [LARGE SCALE ANALYSIS] AT ALA-2</scope>
    <scope>CLEAVAGE OF INITIATOR METHIONINE [LARGE SCALE ANALYSIS]</scope>
    <scope>IDENTIFICATION BY MASS SPECTROMETRY [LARGE SCALE ANALYSIS]</scope>
</reference>
<reference key="14">
    <citation type="journal article" date="2017" name="Mol. Biol. Cell">
        <title>Quantitative high-content imaging identifies novel regulators of Neo1 trafficking at endosomes.</title>
        <authorList>
            <person name="Dalton L.E."/>
            <person name="Bean B.D.M."/>
            <person name="Davey M."/>
            <person name="Conibear E."/>
        </authorList>
    </citation>
    <scope>INTERACTION WITH DOP1</scope>
</reference>
<organism>
    <name type="scientific">Saccharomyces cerevisiae (strain ATCC 204508 / S288c)</name>
    <name type="common">Baker's yeast</name>
    <dbReference type="NCBI Taxonomy" id="559292"/>
    <lineage>
        <taxon>Eukaryota</taxon>
        <taxon>Fungi</taxon>
        <taxon>Dikarya</taxon>
        <taxon>Ascomycota</taxon>
        <taxon>Saccharomycotina</taxon>
        <taxon>Saccharomycetes</taxon>
        <taxon>Saccharomycetales</taxon>
        <taxon>Saccharomycetaceae</taxon>
        <taxon>Saccharomyces</taxon>
    </lineage>
</organism>
<proteinExistence type="evidence at protein level"/>
<evidence type="ECO:0000256" key="1">
    <source>
        <dbReference type="SAM" id="MobiDB-lite"/>
    </source>
</evidence>
<evidence type="ECO:0000269" key="2">
    <source>
    </source>
</evidence>
<evidence type="ECO:0000269" key="3">
    <source>
    </source>
</evidence>
<evidence type="ECO:0000269" key="4">
    <source>
    </source>
</evidence>
<evidence type="ECO:0000269" key="5">
    <source>
    </source>
</evidence>
<evidence type="ECO:0000269" key="6">
    <source>
    </source>
</evidence>
<evidence type="ECO:0000269" key="7">
    <source>
    </source>
</evidence>
<evidence type="ECO:0000269" key="8">
    <source>
    </source>
</evidence>
<evidence type="ECO:0000305" key="9"/>
<evidence type="ECO:0007744" key="10">
    <source>
    </source>
</evidence>
<evidence type="ECO:0007744" key="11">
    <source>
    </source>
</evidence>
<name>MON2_YEAST</name>
<protein>
    <recommendedName>
        <fullName>Protein MON2</fullName>
    </recommendedName>
</protein>
<gene>
    <name type="primary">MON2</name>
    <name type="synonym">YSL2</name>
    <name type="ordered locus">YNL297C</name>
    <name type="ORF">N0453</name>
</gene>
<comment type="function">
    <text evidence="2 3 6 7">Required for traffic between late Golgi and early endosomes (PubMed:16219684, PubMed:16301316). Required for endocytosis and maintenance of vacuolar structure (PubMed:12052896, PubMed:12134085, PubMed:16219684).</text>
</comment>
<comment type="subunit">
    <text evidence="2 5 6 7 8">Homodimer (PubMed:16219684). Interacts with DOP1 (PubMed:16219684, PubMed:16301316, PubMed:28404745). Interacts with ARL1 (PubMed:12052896). Interacts with NEO1 (PubMed:15314152).</text>
</comment>
<comment type="interaction">
    <interactant intactId="EBI-28333">
        <id>P48563</id>
    </interactant>
    <interactant intactId="EBI-34442">
        <id>Q03921</id>
        <label>DOP1</label>
    </interactant>
    <organismsDiffer>false</organismsDiffer>
    <experiments>6</experiments>
</comment>
<comment type="interaction">
    <interactant intactId="EBI-28333">
        <id>P48563</id>
    </interactant>
    <interactant intactId="EBI-7569">
        <id>P38817</id>
        <label>GGA2</label>
    </interactant>
    <organismsDiffer>false</organismsDiffer>
    <experiments>3</experiments>
</comment>
<comment type="subcellular location">
    <subcellularLocation>
        <location evidence="2 6 7">Golgi apparatus membrane</location>
        <topology evidence="2 6 7">Peripheral membrane protein</topology>
    </subcellularLocation>
    <text>Late Golgi.</text>
</comment>
<comment type="miscellaneous">
    <text evidence="4">Present with 2410 molecules/cell in log phase SD medium.</text>
</comment>
<comment type="similarity">
    <text evidence="9">Belongs to the MON2 family.</text>
</comment>
<sequence>MAMNTGGFDSMQRQLEAELRSLSSESKRRNSTIRHASDKSIEILKRVHSFEELERHPDFALPFVLACQSRNAKMTTLAMQCLQGLSTVPSIPRSRLSEILDAFIEATHLAMEIQLKVLQVVPIFFKTYGKFIYGPLCKKLLLCCSNLLHVPNKAPVVVGTASATLQQLIDEIFDRLSIESVVDDKQYEVLISNSESIKVNVYRYDANKLFDNICSLNEISSNGAVSDEEMLLDIGDIPIDYGLEILESILKNSQKNLLECQDLQYLLRVKAIPLLLRCISSSRHFSTAVRSCRCLKLLIRKEYLSILELELEVILSLLIHGISVESNLSGWQRVLSLELFKDLSQDPEIVNTLYMDYDNYPDKKHVFKYLLKECIVLLNSPEYITFLAPSKVVEKMDSPLITTENSTVKTKFMHLLDKSNAPSINITYIISLILTICNHLCEGLNKSALESSPLEKKIEDKEREEGTGNDSTVVKVYSGLFSGLFELNKLFLYSTSLETSIFHLVVRAFQKLAHSAGVLSLKDKLRACMKLFSILITNNVTSSNQYSFNDTSKSAKNQHTRNISTSSVTTSPVESTKNPSRSIADSAQNKEMKRRLHPRNISSRQVSLLRALISLSISLGPIFDSESWRYTFLTWQWITYYIYGPSADFKESFYSEDIPPPPILTKSDVTSIESSLTKFFESTSSYSCSTFHLVLTRLILDSKNTLTLEQTNLNLNNDIGYHPLDAKDEIIPCIYNKAFFVNKIGELATYNCKKFLFGKNGKELWSLISTYMIKLISNREMDNDSLRLYTVRVFTDIIKKATNEVGNSDEQDNKVKQFGTLENLVIDSLMATINSIKQLDIGKQEIYNGTINVESDILFQLLLTLKEILNEFGELLMNSWTNIFNIINSPFEWTVEDTDFSVNEDIDDSSLFEGIVQKHKNMIQVSYDVFKLISDDFLQSLPMSVIKFVIDTLVNFVSQKRNLNISFSSISQFWLVGDYLRVRFNPETLNLSDEKRRSLSEKINNQKLIEIITSSSSHDWELYNGLWIYLLKNLINCTNDDRVEVKNGAVQTFFRIIDSHSVCFPPWDLIFLEVIEPLLTKEWSTEELENETDFINVTLQGLIKLYPEHFKDFKNNTTCAKEWSMLLDFLKRLLSSTSNNTKNAVILNYQTLLKEIITIEDVPSDILKKCCEIFTDYNITYSDLSTNASSKTEYDCIYELITGFPPLYQLISKYDAMTDEFVEKVLLLFNSAIKYPLLPEFVQDKTKPSSMQKAILSGLDIFMTNDSKDTEILILLQLSTISILAFDTREKITKKLGPKLPKASLNRLPTFEAISYMSCSNLRNRIAKIDQFGISTLKAKHILRILKNLAEIIKRKSLITGSESDEIPIWVLASNCFCDLSNKIFKSLQEDAENPLKDNFCDLFINVIVVTLQRINPELDNLTEIDDLNEYSKYREILLENRIIDLFNERQLDTFIYAVWDCSFLYEFDELENALMQDCGTFSELSQKLSSFDFSCIFGSTTNPRFQTKYKCSLECLQDLVNFMLNTNEKLRKLTAPYLSARIALALRRYISDEYLIGRAPIPKLRKTELATLLNGLCVILRGVLDQNSTLGNKQIGVENLQTLSPLILRTIPVSHKMDGLQDKVLELSLGFTKLD</sequence>
<feature type="initiator methionine" description="Removed" evidence="11">
    <location>
        <position position="1"/>
    </location>
</feature>
<feature type="chain" id="PRO_0000203372" description="Protein MON2">
    <location>
        <begin position="2"/>
        <end position="1636"/>
    </location>
</feature>
<feature type="region of interest" description="Golgi membrane targeting and interaction with ARL1" evidence="2">
    <location>
        <begin position="60"/>
        <end position="410"/>
    </location>
</feature>
<feature type="region of interest" description="Disordered" evidence="1">
    <location>
        <begin position="547"/>
        <end position="596"/>
    </location>
</feature>
<feature type="region of interest" description="Required for function in membrane trafficking">
    <location>
        <begin position="1501"/>
        <end position="1636"/>
    </location>
</feature>
<feature type="compositionally biased region" description="Polar residues" evidence="1">
    <location>
        <begin position="547"/>
        <end position="563"/>
    </location>
</feature>
<feature type="compositionally biased region" description="Low complexity" evidence="1">
    <location>
        <begin position="564"/>
        <end position="576"/>
    </location>
</feature>
<feature type="compositionally biased region" description="Polar residues" evidence="1">
    <location>
        <begin position="577"/>
        <end position="589"/>
    </location>
</feature>
<feature type="modified residue" description="N-acetylalanine" evidence="11">
    <location>
        <position position="2"/>
    </location>
</feature>
<feature type="modified residue" description="Phosphoserine" evidence="10">
    <location>
        <position position="564"/>
    </location>
</feature>
<feature type="modified residue" description="Phosphoserine" evidence="10">
    <location>
        <position position="567"/>
    </location>
</feature>
<feature type="modified residue" description="Phosphoserine" evidence="10">
    <location>
        <position position="571"/>
    </location>
</feature>
<keyword id="KW-0007">Acetylation</keyword>
<keyword id="KW-0333">Golgi apparatus</keyword>
<keyword id="KW-0472">Membrane</keyword>
<keyword id="KW-0597">Phosphoprotein</keyword>
<keyword id="KW-0653">Protein transport</keyword>
<keyword id="KW-1185">Reference proteome</keyword>
<keyword id="KW-0813">Transport</keyword>
<accession>P48563</accession>
<accession>D6W0P7</accession>
<dbReference type="EMBL" id="U23084">
    <property type="protein sequence ID" value="AAC49101.1"/>
    <property type="molecule type" value="Genomic_DNA"/>
</dbReference>
<dbReference type="EMBL" id="Z71573">
    <property type="protein sequence ID" value="CAA96214.1"/>
    <property type="molecule type" value="Genomic_DNA"/>
</dbReference>
<dbReference type="EMBL" id="BK006947">
    <property type="protein sequence ID" value="DAA10263.1"/>
    <property type="molecule type" value="Genomic_DNA"/>
</dbReference>
<dbReference type="PIR" id="S60403">
    <property type="entry name" value="S60403"/>
</dbReference>
<dbReference type="RefSeq" id="NP_014102.1">
    <property type="nucleotide sequence ID" value="NM_001183135.1"/>
</dbReference>
<dbReference type="SMR" id="P48563"/>
<dbReference type="BioGRID" id="35541">
    <property type="interactions" value="457"/>
</dbReference>
<dbReference type="ComplexPortal" id="CPX-1028">
    <property type="entry name" value="NEO1-MON2-ARL1-DOP1 membrane remodeling complex"/>
</dbReference>
<dbReference type="FunCoup" id="P48563">
    <property type="interactions" value="871"/>
</dbReference>
<dbReference type="IntAct" id="P48563">
    <property type="interactions" value="8"/>
</dbReference>
<dbReference type="MINT" id="P48563"/>
<dbReference type="STRING" id="4932.YNL297C"/>
<dbReference type="iPTMnet" id="P48563"/>
<dbReference type="PaxDb" id="4932-YNL297C"/>
<dbReference type="PeptideAtlas" id="P48563"/>
<dbReference type="EnsemblFungi" id="YNL297C_mRNA">
    <property type="protein sequence ID" value="YNL297C"/>
    <property type="gene ID" value="YNL297C"/>
</dbReference>
<dbReference type="GeneID" id="855420"/>
<dbReference type="KEGG" id="sce:YNL297C"/>
<dbReference type="AGR" id="SGD:S000005241"/>
<dbReference type="SGD" id="S000005241">
    <property type="gene designation" value="MON2"/>
</dbReference>
<dbReference type="VEuPathDB" id="FungiDB:YNL297C"/>
<dbReference type="eggNOG" id="KOG1848">
    <property type="taxonomic scope" value="Eukaryota"/>
</dbReference>
<dbReference type="GeneTree" id="ENSGT00940000174858"/>
<dbReference type="HOGENOM" id="CLU_001169_1_0_1"/>
<dbReference type="InParanoid" id="P48563"/>
<dbReference type="OMA" id="AWRLCLN"/>
<dbReference type="OrthoDB" id="294853at2759"/>
<dbReference type="BioCyc" id="YEAST:G3O-33285-MONOMER"/>
<dbReference type="BioGRID-ORCS" id="855420">
    <property type="hits" value="0 hits in 10 CRISPR screens"/>
</dbReference>
<dbReference type="PRO" id="PR:P48563"/>
<dbReference type="Proteomes" id="UP000002311">
    <property type="component" value="Chromosome XIV"/>
</dbReference>
<dbReference type="RNAct" id="P48563">
    <property type="molecule type" value="protein"/>
</dbReference>
<dbReference type="GO" id="GO:0005829">
    <property type="term" value="C:cytosol"/>
    <property type="evidence" value="ECO:0007669"/>
    <property type="project" value="GOC"/>
</dbReference>
<dbReference type="GO" id="GO:0031901">
    <property type="term" value="C:early endosome membrane"/>
    <property type="evidence" value="ECO:0000314"/>
    <property type="project" value="SGD"/>
</dbReference>
<dbReference type="GO" id="GO:0005768">
    <property type="term" value="C:endosome"/>
    <property type="evidence" value="ECO:0000314"/>
    <property type="project" value="SGD"/>
</dbReference>
<dbReference type="GO" id="GO:0010008">
    <property type="term" value="C:endosome membrane"/>
    <property type="evidence" value="ECO:0000303"/>
    <property type="project" value="ComplexPortal"/>
</dbReference>
<dbReference type="GO" id="GO:0005794">
    <property type="term" value="C:Golgi apparatus"/>
    <property type="evidence" value="ECO:0000314"/>
    <property type="project" value="UniProtKB"/>
</dbReference>
<dbReference type="GO" id="GO:0000139">
    <property type="term" value="C:Golgi membrane"/>
    <property type="evidence" value="ECO:0007669"/>
    <property type="project" value="UniProtKB-SubCell"/>
</dbReference>
<dbReference type="GO" id="GO:0005802">
    <property type="term" value="C:trans-Golgi network"/>
    <property type="evidence" value="ECO:0000314"/>
    <property type="project" value="SGD"/>
</dbReference>
<dbReference type="GO" id="GO:0005085">
    <property type="term" value="F:guanyl-nucleotide exchange factor activity"/>
    <property type="evidence" value="ECO:0000316"/>
    <property type="project" value="SGD"/>
</dbReference>
<dbReference type="GO" id="GO:0006897">
    <property type="term" value="P:endocytosis"/>
    <property type="evidence" value="ECO:0000315"/>
    <property type="project" value="SGD"/>
</dbReference>
<dbReference type="GO" id="GO:0006895">
    <property type="term" value="P:Golgi to endosome transport"/>
    <property type="evidence" value="ECO:0000315"/>
    <property type="project" value="HGNC-UCL"/>
</dbReference>
<dbReference type="GO" id="GO:0006623">
    <property type="term" value="P:protein targeting to vacuole"/>
    <property type="evidence" value="ECO:0000314"/>
    <property type="project" value="SGD"/>
</dbReference>
<dbReference type="GO" id="GO:0042147">
    <property type="term" value="P:retrograde transport, endosome to Golgi"/>
    <property type="evidence" value="ECO:0000315"/>
    <property type="project" value="SGD"/>
</dbReference>
<dbReference type="GO" id="GO:0098629">
    <property type="term" value="P:trans-Golgi network membrane organization"/>
    <property type="evidence" value="ECO:0000303"/>
    <property type="project" value="ComplexPortal"/>
</dbReference>
<dbReference type="InterPro" id="IPR032629">
    <property type="entry name" value="DCB_dom"/>
</dbReference>
<dbReference type="InterPro" id="IPR032691">
    <property type="entry name" value="Mon2/Sec7/BIG1-like_HUS"/>
</dbReference>
<dbReference type="InterPro" id="IPR032817">
    <property type="entry name" value="Mon2_C"/>
</dbReference>
<dbReference type="Pfam" id="PF16213">
    <property type="entry name" value="DCB"/>
    <property type="match status" value="1"/>
</dbReference>
<dbReference type="Pfam" id="PF16206">
    <property type="entry name" value="Mon2_C"/>
    <property type="match status" value="1"/>
</dbReference>
<dbReference type="Pfam" id="PF12783">
    <property type="entry name" value="Sec7-like_HUS"/>
    <property type="match status" value="1"/>
</dbReference>